<name>PTH_STAS1</name>
<dbReference type="EC" id="3.1.1.29" evidence="1"/>
<dbReference type="EMBL" id="AP008934">
    <property type="protein sequence ID" value="BAE19399.1"/>
    <property type="molecule type" value="Genomic_DNA"/>
</dbReference>
<dbReference type="RefSeq" id="WP_002484201.1">
    <property type="nucleotide sequence ID" value="NZ_MTGA01000029.1"/>
</dbReference>
<dbReference type="SMR" id="Q49V11"/>
<dbReference type="GeneID" id="66868424"/>
<dbReference type="KEGG" id="ssp:SSP2254"/>
<dbReference type="eggNOG" id="COG0193">
    <property type="taxonomic scope" value="Bacteria"/>
</dbReference>
<dbReference type="HOGENOM" id="CLU_062456_4_1_9"/>
<dbReference type="OrthoDB" id="9800507at2"/>
<dbReference type="Proteomes" id="UP000006371">
    <property type="component" value="Chromosome"/>
</dbReference>
<dbReference type="GO" id="GO:0005737">
    <property type="term" value="C:cytoplasm"/>
    <property type="evidence" value="ECO:0007669"/>
    <property type="project" value="UniProtKB-SubCell"/>
</dbReference>
<dbReference type="GO" id="GO:0004045">
    <property type="term" value="F:peptidyl-tRNA hydrolase activity"/>
    <property type="evidence" value="ECO:0007669"/>
    <property type="project" value="UniProtKB-UniRule"/>
</dbReference>
<dbReference type="GO" id="GO:0000049">
    <property type="term" value="F:tRNA binding"/>
    <property type="evidence" value="ECO:0007669"/>
    <property type="project" value="UniProtKB-UniRule"/>
</dbReference>
<dbReference type="GO" id="GO:0006515">
    <property type="term" value="P:protein quality control for misfolded or incompletely synthesized proteins"/>
    <property type="evidence" value="ECO:0007669"/>
    <property type="project" value="UniProtKB-UniRule"/>
</dbReference>
<dbReference type="GO" id="GO:0072344">
    <property type="term" value="P:rescue of stalled ribosome"/>
    <property type="evidence" value="ECO:0007669"/>
    <property type="project" value="UniProtKB-UniRule"/>
</dbReference>
<dbReference type="CDD" id="cd00462">
    <property type="entry name" value="PTH"/>
    <property type="match status" value="1"/>
</dbReference>
<dbReference type="FunFam" id="3.40.50.1470:FF:000001">
    <property type="entry name" value="Peptidyl-tRNA hydrolase"/>
    <property type="match status" value="1"/>
</dbReference>
<dbReference type="Gene3D" id="3.40.50.1470">
    <property type="entry name" value="Peptidyl-tRNA hydrolase"/>
    <property type="match status" value="1"/>
</dbReference>
<dbReference type="HAMAP" id="MF_00083">
    <property type="entry name" value="Pept_tRNA_hydro_bact"/>
    <property type="match status" value="1"/>
</dbReference>
<dbReference type="InterPro" id="IPR001328">
    <property type="entry name" value="Pept_tRNA_hydro"/>
</dbReference>
<dbReference type="InterPro" id="IPR018171">
    <property type="entry name" value="Pept_tRNA_hydro_CS"/>
</dbReference>
<dbReference type="InterPro" id="IPR036416">
    <property type="entry name" value="Pept_tRNA_hydro_sf"/>
</dbReference>
<dbReference type="NCBIfam" id="TIGR00447">
    <property type="entry name" value="pth"/>
    <property type="match status" value="1"/>
</dbReference>
<dbReference type="PANTHER" id="PTHR17224">
    <property type="entry name" value="PEPTIDYL-TRNA HYDROLASE"/>
    <property type="match status" value="1"/>
</dbReference>
<dbReference type="PANTHER" id="PTHR17224:SF1">
    <property type="entry name" value="PEPTIDYL-TRNA HYDROLASE"/>
    <property type="match status" value="1"/>
</dbReference>
<dbReference type="Pfam" id="PF01195">
    <property type="entry name" value="Pept_tRNA_hydro"/>
    <property type="match status" value="1"/>
</dbReference>
<dbReference type="SUPFAM" id="SSF53178">
    <property type="entry name" value="Peptidyl-tRNA hydrolase-like"/>
    <property type="match status" value="1"/>
</dbReference>
<dbReference type="PROSITE" id="PS01195">
    <property type="entry name" value="PEPT_TRNA_HYDROL_1"/>
    <property type="match status" value="1"/>
</dbReference>
<dbReference type="PROSITE" id="PS01196">
    <property type="entry name" value="PEPT_TRNA_HYDROL_2"/>
    <property type="match status" value="1"/>
</dbReference>
<organism>
    <name type="scientific">Staphylococcus saprophyticus subsp. saprophyticus (strain ATCC 15305 / DSM 20229 / NCIMB 8711 / NCTC 7292 / S-41)</name>
    <dbReference type="NCBI Taxonomy" id="342451"/>
    <lineage>
        <taxon>Bacteria</taxon>
        <taxon>Bacillati</taxon>
        <taxon>Bacillota</taxon>
        <taxon>Bacilli</taxon>
        <taxon>Bacillales</taxon>
        <taxon>Staphylococcaceae</taxon>
        <taxon>Staphylococcus</taxon>
    </lineage>
</organism>
<reference key="1">
    <citation type="journal article" date="2005" name="Proc. Natl. Acad. Sci. U.S.A.">
        <title>Whole genome sequence of Staphylococcus saprophyticus reveals the pathogenesis of uncomplicated urinary tract infection.</title>
        <authorList>
            <person name="Kuroda M."/>
            <person name="Yamashita A."/>
            <person name="Hirakawa H."/>
            <person name="Kumano M."/>
            <person name="Morikawa K."/>
            <person name="Higashide M."/>
            <person name="Maruyama A."/>
            <person name="Inose Y."/>
            <person name="Matoba K."/>
            <person name="Toh H."/>
            <person name="Kuhara S."/>
            <person name="Hattori M."/>
            <person name="Ohta T."/>
        </authorList>
    </citation>
    <scope>NUCLEOTIDE SEQUENCE [LARGE SCALE GENOMIC DNA]</scope>
    <source>
        <strain>ATCC 15305 / DSM 20229 / NCIMB 8711 / NCTC 7292 / S-41</strain>
    </source>
</reference>
<gene>
    <name evidence="1" type="primary">pth</name>
    <name type="ordered locus">SSP2254</name>
</gene>
<comment type="function">
    <text evidence="1">Hydrolyzes ribosome-free peptidyl-tRNAs (with 1 or more amino acids incorporated), which drop off the ribosome during protein synthesis, or as a result of ribosome stalling.</text>
</comment>
<comment type="function">
    <text evidence="1">Catalyzes the release of premature peptidyl moieties from peptidyl-tRNA molecules trapped in stalled 50S ribosomal subunits, and thus maintains levels of free tRNAs and 50S ribosomes.</text>
</comment>
<comment type="catalytic activity">
    <reaction evidence="1">
        <text>an N-acyl-L-alpha-aminoacyl-tRNA + H2O = an N-acyl-L-amino acid + a tRNA + H(+)</text>
        <dbReference type="Rhea" id="RHEA:54448"/>
        <dbReference type="Rhea" id="RHEA-COMP:10123"/>
        <dbReference type="Rhea" id="RHEA-COMP:13883"/>
        <dbReference type="ChEBI" id="CHEBI:15377"/>
        <dbReference type="ChEBI" id="CHEBI:15378"/>
        <dbReference type="ChEBI" id="CHEBI:59874"/>
        <dbReference type="ChEBI" id="CHEBI:78442"/>
        <dbReference type="ChEBI" id="CHEBI:138191"/>
        <dbReference type="EC" id="3.1.1.29"/>
    </reaction>
</comment>
<comment type="subunit">
    <text evidence="1">Monomer.</text>
</comment>
<comment type="subcellular location">
    <subcellularLocation>
        <location evidence="1">Cytoplasm</location>
    </subcellularLocation>
</comment>
<comment type="similarity">
    <text evidence="1">Belongs to the PTH family.</text>
</comment>
<accession>Q49V11</accession>
<protein>
    <recommendedName>
        <fullName evidence="1">Peptidyl-tRNA hydrolase</fullName>
        <shortName evidence="1">Pth</shortName>
        <ecNumber evidence="1">3.1.1.29</ecNumber>
    </recommendedName>
</protein>
<proteinExistence type="inferred from homology"/>
<evidence type="ECO:0000255" key="1">
    <source>
        <dbReference type="HAMAP-Rule" id="MF_00083"/>
    </source>
</evidence>
<sequence>MKCIVGLGNIGKRFEQTRHNIGFEVIDFMLEQNRFSLDKQKFKGAYTIERLAGEKVMFIEPMTMMNLSGEAVAPLMKYYDIDIEDLIVLYDDLDLPQGEIRLRQKGSAGGHNGMKSIIQMLGTDQFKRIRIGVDRPSNGMAIVDYVLQKFSNQEMETMNKVIEHSARAIEAYIESNRFDRVMNEYNGEIK</sequence>
<feature type="chain" id="PRO_0000264116" description="Peptidyl-tRNA hydrolase">
    <location>
        <begin position="1"/>
        <end position="190"/>
    </location>
</feature>
<feature type="active site" description="Proton acceptor" evidence="1">
    <location>
        <position position="19"/>
    </location>
</feature>
<feature type="binding site" evidence="1">
    <location>
        <position position="14"/>
    </location>
    <ligand>
        <name>tRNA</name>
        <dbReference type="ChEBI" id="CHEBI:17843"/>
    </ligand>
</feature>
<feature type="binding site" evidence="1">
    <location>
        <position position="64"/>
    </location>
    <ligand>
        <name>tRNA</name>
        <dbReference type="ChEBI" id="CHEBI:17843"/>
    </ligand>
</feature>
<feature type="binding site" evidence="1">
    <location>
        <position position="66"/>
    </location>
    <ligand>
        <name>tRNA</name>
        <dbReference type="ChEBI" id="CHEBI:17843"/>
    </ligand>
</feature>
<feature type="binding site" evidence="1">
    <location>
        <position position="112"/>
    </location>
    <ligand>
        <name>tRNA</name>
        <dbReference type="ChEBI" id="CHEBI:17843"/>
    </ligand>
</feature>
<feature type="site" description="Discriminates between blocked and unblocked aminoacyl-tRNA" evidence="1">
    <location>
        <position position="9"/>
    </location>
</feature>
<feature type="site" description="Stabilizes the basic form of H active site to accept a proton" evidence="1">
    <location>
        <position position="91"/>
    </location>
</feature>
<keyword id="KW-0963">Cytoplasm</keyword>
<keyword id="KW-0378">Hydrolase</keyword>
<keyword id="KW-1185">Reference proteome</keyword>
<keyword id="KW-0694">RNA-binding</keyword>
<keyword id="KW-0820">tRNA-binding</keyword>